<dbReference type="EMBL" id="CR767821">
    <property type="protein sequence ID" value="CAH57757.1"/>
    <property type="molecule type" value="Genomic_DNA"/>
</dbReference>
<dbReference type="EMBL" id="CR925678">
    <property type="protein sequence ID" value="CAI26532.1"/>
    <property type="molecule type" value="Genomic_DNA"/>
</dbReference>
<dbReference type="RefSeq" id="WP_011154731.1">
    <property type="nucleotide sequence ID" value="NC_005295.2"/>
</dbReference>
<dbReference type="SMR" id="Q5HCC9"/>
<dbReference type="GeneID" id="33057921"/>
<dbReference type="KEGG" id="eru:Erum0480"/>
<dbReference type="KEGG" id="erw:ERWE_CDS_00380"/>
<dbReference type="eggNOG" id="COG0268">
    <property type="taxonomic scope" value="Bacteria"/>
</dbReference>
<dbReference type="HOGENOM" id="CLU_160655_3_0_5"/>
<dbReference type="Proteomes" id="UP000001021">
    <property type="component" value="Chromosome"/>
</dbReference>
<dbReference type="GO" id="GO:0015935">
    <property type="term" value="C:small ribosomal subunit"/>
    <property type="evidence" value="ECO:0007669"/>
    <property type="project" value="TreeGrafter"/>
</dbReference>
<dbReference type="GO" id="GO:0070181">
    <property type="term" value="F:small ribosomal subunit rRNA binding"/>
    <property type="evidence" value="ECO:0007669"/>
    <property type="project" value="TreeGrafter"/>
</dbReference>
<dbReference type="GO" id="GO:0003735">
    <property type="term" value="F:structural constituent of ribosome"/>
    <property type="evidence" value="ECO:0007669"/>
    <property type="project" value="InterPro"/>
</dbReference>
<dbReference type="GO" id="GO:0006412">
    <property type="term" value="P:translation"/>
    <property type="evidence" value="ECO:0007669"/>
    <property type="project" value="UniProtKB-UniRule"/>
</dbReference>
<dbReference type="Gene3D" id="1.20.58.110">
    <property type="entry name" value="Ribosomal protein S20"/>
    <property type="match status" value="1"/>
</dbReference>
<dbReference type="HAMAP" id="MF_00500">
    <property type="entry name" value="Ribosomal_bS20"/>
    <property type="match status" value="1"/>
</dbReference>
<dbReference type="InterPro" id="IPR002583">
    <property type="entry name" value="Ribosomal_bS20"/>
</dbReference>
<dbReference type="InterPro" id="IPR036510">
    <property type="entry name" value="Ribosomal_bS20_sf"/>
</dbReference>
<dbReference type="NCBIfam" id="TIGR00029">
    <property type="entry name" value="S20"/>
    <property type="match status" value="1"/>
</dbReference>
<dbReference type="PANTHER" id="PTHR33398">
    <property type="entry name" value="30S RIBOSOMAL PROTEIN S20"/>
    <property type="match status" value="1"/>
</dbReference>
<dbReference type="PANTHER" id="PTHR33398:SF1">
    <property type="entry name" value="SMALL RIBOSOMAL SUBUNIT PROTEIN BS20C"/>
    <property type="match status" value="1"/>
</dbReference>
<dbReference type="Pfam" id="PF01649">
    <property type="entry name" value="Ribosomal_S20p"/>
    <property type="match status" value="1"/>
</dbReference>
<dbReference type="SUPFAM" id="SSF46992">
    <property type="entry name" value="Ribosomal protein S20"/>
    <property type="match status" value="1"/>
</dbReference>
<organism>
    <name type="scientific">Ehrlichia ruminantium (strain Welgevonden)</name>
    <dbReference type="NCBI Taxonomy" id="254945"/>
    <lineage>
        <taxon>Bacteria</taxon>
        <taxon>Pseudomonadati</taxon>
        <taxon>Pseudomonadota</taxon>
        <taxon>Alphaproteobacteria</taxon>
        <taxon>Rickettsiales</taxon>
        <taxon>Anaplasmataceae</taxon>
        <taxon>Ehrlichia</taxon>
    </lineage>
</organism>
<accession>Q5HCC9</accession>
<accession>Q5FCI8</accession>
<gene>
    <name evidence="1" type="primary">rpsT</name>
    <name type="ordered locus">Erum0480</name>
    <name type="ordered locus">ERWE_CDS_00380</name>
</gene>
<reference key="1">
    <citation type="journal article" date="2005" name="Proc. Natl. Acad. Sci. U.S.A.">
        <title>The genome of the heartwater agent Ehrlichia ruminantium contains multiple tandem repeats of actively variable copy number.</title>
        <authorList>
            <person name="Collins N.E."/>
            <person name="Liebenberg J."/>
            <person name="de Villiers E.P."/>
            <person name="Brayton K.A."/>
            <person name="Louw E."/>
            <person name="Pretorius A."/>
            <person name="Faber F.E."/>
            <person name="van Heerden H."/>
            <person name="Josemans A."/>
            <person name="van Kleef M."/>
            <person name="Steyn H.C."/>
            <person name="van Strijp M.F."/>
            <person name="Zweygarth E."/>
            <person name="Jongejan F."/>
            <person name="Maillard J.C."/>
            <person name="Berthier D."/>
            <person name="Botha M."/>
            <person name="Joubert F."/>
            <person name="Corton C.H."/>
            <person name="Thomson N.R."/>
            <person name="Allsopp M.T."/>
            <person name="Allsopp B.A."/>
        </authorList>
    </citation>
    <scope>NUCLEOTIDE SEQUENCE [LARGE SCALE GENOMIC DNA]</scope>
    <source>
        <strain>Welgevonden</strain>
    </source>
</reference>
<reference key="2">
    <citation type="journal article" date="2006" name="J. Bacteriol.">
        <title>Comparative genomic analysis of three strains of Ehrlichia ruminantium reveals an active process of genome size plasticity.</title>
        <authorList>
            <person name="Frutos R."/>
            <person name="Viari A."/>
            <person name="Ferraz C."/>
            <person name="Morgat A."/>
            <person name="Eychenie S."/>
            <person name="Kandassamy Y."/>
            <person name="Chantal I."/>
            <person name="Bensaid A."/>
            <person name="Coissac E."/>
            <person name="Vachiery N."/>
            <person name="Demaille J."/>
            <person name="Martinez D."/>
        </authorList>
    </citation>
    <scope>NUCLEOTIDE SEQUENCE [LARGE SCALE GENOMIC DNA]</scope>
    <source>
        <strain>Welgevonden</strain>
    </source>
</reference>
<comment type="function">
    <text evidence="1">Binds directly to 16S ribosomal RNA.</text>
</comment>
<comment type="similarity">
    <text evidence="1">Belongs to the bacterial ribosomal protein bS20 family.</text>
</comment>
<feature type="chain" id="PRO_0000224968" description="Small ribosomal subunit protein bS20">
    <location>
        <begin position="1"/>
        <end position="95"/>
    </location>
</feature>
<protein>
    <recommendedName>
        <fullName evidence="1">Small ribosomal subunit protein bS20</fullName>
    </recommendedName>
    <alternativeName>
        <fullName evidence="2">30S ribosomal protein S20</fullName>
    </alternativeName>
</protein>
<sequence length="95" mass="11060">MANHPSAKKMIKVIKKRTMINRMRKSRAHNYIKKFMAALAAGNKELMLENFKKAESNLHRCVNKKIIHRNTAARKISRLALKLKTFDLQQQEKAS</sequence>
<name>RS20_EHRRW</name>
<keyword id="KW-0687">Ribonucleoprotein</keyword>
<keyword id="KW-0689">Ribosomal protein</keyword>
<keyword id="KW-0694">RNA-binding</keyword>
<keyword id="KW-0699">rRNA-binding</keyword>
<evidence type="ECO:0000255" key="1">
    <source>
        <dbReference type="HAMAP-Rule" id="MF_00500"/>
    </source>
</evidence>
<evidence type="ECO:0000305" key="2"/>
<proteinExistence type="inferred from homology"/>